<comment type="function">
    <text evidence="2">Polycomb group (PcG) protein that binds to the Polycomb response elements (PREs) found in the regulatory regions of many genes. PcG proteins act by forming multiprotein complexes, which are required to maintain the transcriptionally repressive state of homeotic genes throughout development. PcG proteins are not required to initiate repression, but to maintain it during later stages of development. They probably act via the methylation of histones, rendering chromatin heritably changed in its expressibility. Necessary but not sufficient to recruit a functional PcG repressive complex that represses target genes, suggesting that the recruitment of the distinct PRC1 complex is also required to allow a subsequent repression (By similarity).</text>
</comment>
<comment type="subunit">
    <text evidence="2">Interacts with pho as a component of the pho-repressive complex (PhoRC).</text>
</comment>
<comment type="subcellular location">
    <subcellularLocation>
        <location evidence="2">Nucleus</location>
    </subcellularLocation>
</comment>
<comment type="domain">
    <text evidence="1">MBT repeats have unique discriminatory binding activity for methylated Lys residues in H3 and H4; the MBT repeats bind mono- and dimethylated H3K9Me1, H3K9Me2, H4K20Me1 and H4K20Me2 but fail to interact with these residues if they are unmodified or trimethylated.</text>
</comment>
<comment type="sequence caution" evidence="6">
    <conflict type="erroneous gene model prediction">
        <sequence resource="EMBL-CDS" id="EAL32974"/>
    </conflict>
</comment>
<organism>
    <name type="scientific">Drosophila pseudoobscura pseudoobscura</name>
    <name type="common">Fruit fly</name>
    <dbReference type="NCBI Taxonomy" id="46245"/>
    <lineage>
        <taxon>Eukaryota</taxon>
        <taxon>Metazoa</taxon>
        <taxon>Ecdysozoa</taxon>
        <taxon>Arthropoda</taxon>
        <taxon>Hexapoda</taxon>
        <taxon>Insecta</taxon>
        <taxon>Pterygota</taxon>
        <taxon>Neoptera</taxon>
        <taxon>Endopterygota</taxon>
        <taxon>Diptera</taxon>
        <taxon>Brachycera</taxon>
        <taxon>Muscomorpha</taxon>
        <taxon>Ephydroidea</taxon>
        <taxon>Drosophilidae</taxon>
        <taxon>Drosophila</taxon>
        <taxon>Sophophora</taxon>
    </lineage>
</organism>
<reference key="1">
    <citation type="journal article" date="2005" name="Genome Res.">
        <title>Comparative genome sequencing of Drosophila pseudoobscura: chromosomal, gene, and cis-element evolution.</title>
        <authorList>
            <person name="Richards S."/>
            <person name="Liu Y."/>
            <person name="Bettencourt B.R."/>
            <person name="Hradecky P."/>
            <person name="Letovsky S."/>
            <person name="Nielsen R."/>
            <person name="Thornton K."/>
            <person name="Hubisz M.J."/>
            <person name="Chen R."/>
            <person name="Meisel R.P."/>
            <person name="Couronne O."/>
            <person name="Hua S."/>
            <person name="Smith M.A."/>
            <person name="Zhang P."/>
            <person name="Liu J."/>
            <person name="Bussemaker H.J."/>
            <person name="van Batenburg M.F."/>
            <person name="Howells S.L."/>
            <person name="Scherer S.E."/>
            <person name="Sodergren E."/>
            <person name="Matthews B.B."/>
            <person name="Crosby M.A."/>
            <person name="Schroeder A.J."/>
            <person name="Ortiz-Barrientos D."/>
            <person name="Rives C.M."/>
            <person name="Metzker M.L."/>
            <person name="Muzny D.M."/>
            <person name="Scott G."/>
            <person name="Steffen D."/>
            <person name="Wheeler D.A."/>
            <person name="Worley K.C."/>
            <person name="Havlak P."/>
            <person name="Durbin K.J."/>
            <person name="Egan A."/>
            <person name="Gill R."/>
            <person name="Hume J."/>
            <person name="Morgan M.B."/>
            <person name="Miner G."/>
            <person name="Hamilton C."/>
            <person name="Huang Y."/>
            <person name="Waldron L."/>
            <person name="Verduzco D."/>
            <person name="Clerc-Blankenburg K.P."/>
            <person name="Dubchak I."/>
            <person name="Noor M.A.F."/>
            <person name="Anderson W."/>
            <person name="White K.P."/>
            <person name="Clark A.G."/>
            <person name="Schaeffer S.W."/>
            <person name="Gelbart W.M."/>
            <person name="Weinstock G.M."/>
            <person name="Gibbs R.A."/>
        </authorList>
    </citation>
    <scope>NUCLEOTIDE SEQUENCE [LARGE SCALE GENOMIC DNA]</scope>
    <source>
        <strain>MV2-25 / Tucson 14011-0121.94</strain>
    </source>
</reference>
<name>SMBT_DROPS</name>
<evidence type="ECO:0000250" key="1"/>
<evidence type="ECO:0000250" key="2">
    <source>
        <dbReference type="UniProtKB" id="Q9VK33"/>
    </source>
</evidence>
<evidence type="ECO:0000255" key="3">
    <source>
        <dbReference type="PROSITE-ProRule" id="PRU00184"/>
    </source>
</evidence>
<evidence type="ECO:0000255" key="4">
    <source>
        <dbReference type="PROSITE-ProRule" id="PRU00367"/>
    </source>
</evidence>
<evidence type="ECO:0000256" key="5">
    <source>
        <dbReference type="SAM" id="MobiDB-lite"/>
    </source>
</evidence>
<evidence type="ECO:0000305" key="6"/>
<protein>
    <recommendedName>
        <fullName>Polycomb protein Sfmbt</fullName>
    </recommendedName>
    <alternativeName>
        <fullName>Scm-like with four MBT domain-containing protein 1</fullName>
    </alternativeName>
</protein>
<dbReference type="EMBL" id="CH379061">
    <property type="protein sequence ID" value="EAL32974.2"/>
    <property type="status" value="ALT_SEQ"/>
    <property type="molecule type" value="Genomic_DNA"/>
</dbReference>
<dbReference type="SMR" id="Q29L50"/>
<dbReference type="FunCoup" id="Q29L50">
    <property type="interactions" value="2347"/>
</dbReference>
<dbReference type="STRING" id="46245.Q29L50"/>
<dbReference type="eggNOG" id="KOG3766">
    <property type="taxonomic scope" value="Eukaryota"/>
</dbReference>
<dbReference type="InParanoid" id="Q29L50"/>
<dbReference type="Proteomes" id="UP000001819">
    <property type="component" value="Unplaced"/>
</dbReference>
<dbReference type="GO" id="GO:0005634">
    <property type="term" value="C:nucleus"/>
    <property type="evidence" value="ECO:0000250"/>
    <property type="project" value="UniProtKB"/>
</dbReference>
<dbReference type="GO" id="GO:0003682">
    <property type="term" value="F:chromatin binding"/>
    <property type="evidence" value="ECO:0007669"/>
    <property type="project" value="TreeGrafter"/>
</dbReference>
<dbReference type="GO" id="GO:0003677">
    <property type="term" value="F:DNA binding"/>
    <property type="evidence" value="ECO:0007669"/>
    <property type="project" value="UniProtKB-KW"/>
</dbReference>
<dbReference type="GO" id="GO:0035064">
    <property type="term" value="F:methylated histone binding"/>
    <property type="evidence" value="ECO:0000250"/>
    <property type="project" value="UniProtKB"/>
</dbReference>
<dbReference type="GO" id="GO:0008270">
    <property type="term" value="F:zinc ion binding"/>
    <property type="evidence" value="ECO:0007669"/>
    <property type="project" value="UniProtKB-KW"/>
</dbReference>
<dbReference type="GO" id="GO:0031507">
    <property type="term" value="P:heterochromatin formation"/>
    <property type="evidence" value="ECO:0000250"/>
    <property type="project" value="UniProtKB"/>
</dbReference>
<dbReference type="GO" id="GO:0007446">
    <property type="term" value="P:imaginal disc growth"/>
    <property type="evidence" value="ECO:0000250"/>
    <property type="project" value="UniProtKB"/>
</dbReference>
<dbReference type="GO" id="GO:0045892">
    <property type="term" value="P:negative regulation of DNA-templated transcription"/>
    <property type="evidence" value="ECO:0007669"/>
    <property type="project" value="TreeGrafter"/>
</dbReference>
<dbReference type="CDD" id="cd20119">
    <property type="entry name" value="MBT_dSfmbt_rpt1"/>
    <property type="match status" value="1"/>
</dbReference>
<dbReference type="CDD" id="cd20122">
    <property type="entry name" value="MBT_dSfmbt_rpt2"/>
    <property type="match status" value="1"/>
</dbReference>
<dbReference type="CDD" id="cd20125">
    <property type="entry name" value="MBT_dSfmbt_rpt3"/>
    <property type="match status" value="1"/>
</dbReference>
<dbReference type="CDD" id="cd09580">
    <property type="entry name" value="SAM_Scm-like-4MBT"/>
    <property type="match status" value="1"/>
</dbReference>
<dbReference type="FunFam" id="2.30.30.140:FF:000010">
    <property type="entry name" value="MBT domain-containing protein 1 isoform X1"/>
    <property type="match status" value="1"/>
</dbReference>
<dbReference type="FunFam" id="2.30.30.140:FF:000015">
    <property type="entry name" value="MBT domain-containing protein 1 isoform X1"/>
    <property type="match status" value="1"/>
</dbReference>
<dbReference type="Gene3D" id="2.30.30.140">
    <property type="match status" value="4"/>
</dbReference>
<dbReference type="Gene3D" id="3.30.60.160">
    <property type="match status" value="1"/>
</dbReference>
<dbReference type="Gene3D" id="1.10.150.50">
    <property type="entry name" value="Transcription Factor, Ets-1"/>
    <property type="match status" value="1"/>
</dbReference>
<dbReference type="InterPro" id="IPR004092">
    <property type="entry name" value="Mbt"/>
</dbReference>
<dbReference type="InterPro" id="IPR047358">
    <property type="entry name" value="MBT_dSfmbt_rpt1"/>
</dbReference>
<dbReference type="InterPro" id="IPR047359">
    <property type="entry name" value="MBT_dSfmbt_rpt2"/>
</dbReference>
<dbReference type="InterPro" id="IPR047360">
    <property type="entry name" value="MBT_dSfmbt_rpt3"/>
</dbReference>
<dbReference type="InterPro" id="IPR050548">
    <property type="entry name" value="PcG_chromatin_remod_factors"/>
</dbReference>
<dbReference type="InterPro" id="IPR001660">
    <property type="entry name" value="SAM"/>
</dbReference>
<dbReference type="InterPro" id="IPR013761">
    <property type="entry name" value="SAM/pointed_sf"/>
</dbReference>
<dbReference type="InterPro" id="IPR037605">
    <property type="entry name" value="Sfmbt_SAM"/>
</dbReference>
<dbReference type="InterPro" id="IPR012313">
    <property type="entry name" value="Znf_FCS"/>
</dbReference>
<dbReference type="InterPro" id="IPR038603">
    <property type="entry name" value="Znf_FCS_sf"/>
</dbReference>
<dbReference type="PANTHER" id="PTHR12247">
    <property type="entry name" value="POLYCOMB GROUP PROTEIN"/>
    <property type="match status" value="1"/>
</dbReference>
<dbReference type="PANTHER" id="PTHR12247:SF104">
    <property type="entry name" value="POLYCOMB PROTEIN SFMBT"/>
    <property type="match status" value="1"/>
</dbReference>
<dbReference type="Pfam" id="PF02820">
    <property type="entry name" value="MBT"/>
    <property type="match status" value="4"/>
</dbReference>
<dbReference type="Pfam" id="PF00536">
    <property type="entry name" value="SAM_1"/>
    <property type="match status" value="1"/>
</dbReference>
<dbReference type="Pfam" id="PF21319">
    <property type="entry name" value="zf-FCS_1"/>
    <property type="match status" value="1"/>
</dbReference>
<dbReference type="SMART" id="SM00561">
    <property type="entry name" value="MBT"/>
    <property type="match status" value="4"/>
</dbReference>
<dbReference type="SMART" id="SM00454">
    <property type="entry name" value="SAM"/>
    <property type="match status" value="1"/>
</dbReference>
<dbReference type="SUPFAM" id="SSF47769">
    <property type="entry name" value="SAM/Pointed domain"/>
    <property type="match status" value="1"/>
</dbReference>
<dbReference type="SUPFAM" id="SSF63748">
    <property type="entry name" value="Tudor/PWWP/MBT"/>
    <property type="match status" value="4"/>
</dbReference>
<dbReference type="PROSITE" id="PS51079">
    <property type="entry name" value="MBT"/>
    <property type="match status" value="4"/>
</dbReference>
<dbReference type="PROSITE" id="PS50105">
    <property type="entry name" value="SAM_DOMAIN"/>
    <property type="match status" value="1"/>
</dbReference>
<dbReference type="PROSITE" id="PS51024">
    <property type="entry name" value="ZF_FCS"/>
    <property type="match status" value="1"/>
</dbReference>
<proteinExistence type="inferred from homology"/>
<accession>Q29L50</accession>
<feature type="chain" id="PRO_0000306372" description="Polycomb protein Sfmbt">
    <location>
        <begin position="1"/>
        <end position="1274"/>
    </location>
</feature>
<feature type="repeat" description="MBT 1">
    <location>
        <begin position="564"/>
        <end position="675"/>
    </location>
</feature>
<feature type="repeat" description="MBT 2">
    <location>
        <begin position="683"/>
        <end position="781"/>
    </location>
</feature>
<feature type="repeat" description="MBT 3">
    <location>
        <begin position="789"/>
        <end position="899"/>
    </location>
</feature>
<feature type="repeat" description="MBT 4">
    <location>
        <begin position="907"/>
        <end position="1003"/>
    </location>
</feature>
<feature type="domain" description="SAM" evidence="3">
    <location>
        <begin position="1194"/>
        <end position="1258"/>
    </location>
</feature>
<feature type="zinc finger region" description="FCS-type" evidence="4">
    <location>
        <begin position="331"/>
        <end position="366"/>
    </location>
</feature>
<feature type="region of interest" description="Disordered" evidence="5">
    <location>
        <begin position="266"/>
        <end position="285"/>
    </location>
</feature>
<feature type="region of interest" description="Disordered" evidence="5">
    <location>
        <begin position="381"/>
        <end position="401"/>
    </location>
</feature>
<feature type="region of interest" description="Disordered" evidence="5">
    <location>
        <begin position="488"/>
        <end position="510"/>
    </location>
</feature>
<feature type="region of interest" description="Disordered" evidence="5">
    <location>
        <begin position="1007"/>
        <end position="1063"/>
    </location>
</feature>
<feature type="region of interest" description="Disordered" evidence="5">
    <location>
        <begin position="1083"/>
        <end position="1167"/>
    </location>
</feature>
<feature type="compositionally biased region" description="Polar residues" evidence="5">
    <location>
        <begin position="267"/>
        <end position="278"/>
    </location>
</feature>
<feature type="compositionally biased region" description="Low complexity" evidence="5">
    <location>
        <begin position="381"/>
        <end position="394"/>
    </location>
</feature>
<feature type="compositionally biased region" description="Polar residues" evidence="5">
    <location>
        <begin position="494"/>
        <end position="509"/>
    </location>
</feature>
<feature type="compositionally biased region" description="Basic residues" evidence="5">
    <location>
        <begin position="1019"/>
        <end position="1028"/>
    </location>
</feature>
<feature type="compositionally biased region" description="Low complexity" evidence="5">
    <location>
        <begin position="1038"/>
        <end position="1050"/>
    </location>
</feature>
<feature type="compositionally biased region" description="Acidic residues" evidence="5">
    <location>
        <begin position="1087"/>
        <end position="1114"/>
    </location>
</feature>
<feature type="compositionally biased region" description="Polar residues" evidence="5">
    <location>
        <begin position="1117"/>
        <end position="1128"/>
    </location>
</feature>
<feature type="compositionally biased region" description="Polar residues" evidence="5">
    <location>
        <begin position="1158"/>
        <end position="1167"/>
    </location>
</feature>
<feature type="binding site" evidence="4">
    <location>
        <position position="340"/>
    </location>
    <ligand>
        <name>Zn(2+)</name>
        <dbReference type="ChEBI" id="CHEBI:29105"/>
    </ligand>
</feature>
<feature type="binding site" evidence="4">
    <location>
        <position position="343"/>
    </location>
    <ligand>
        <name>Zn(2+)</name>
        <dbReference type="ChEBI" id="CHEBI:29105"/>
    </ligand>
</feature>
<feature type="binding site" evidence="4">
    <location>
        <position position="360"/>
    </location>
    <ligand>
        <name>Zn(2+)</name>
        <dbReference type="ChEBI" id="CHEBI:29105"/>
    </ligand>
</feature>
<feature type="binding site" evidence="4">
    <location>
        <position position="364"/>
    </location>
    <ligand>
        <name>Zn(2+)</name>
        <dbReference type="ChEBI" id="CHEBI:29105"/>
    </ligand>
</feature>
<gene>
    <name evidence="2" type="primary">Sfmbt</name>
    <name type="ORF">GA14249</name>
</gene>
<sequence>MNPTELHMMWMSSQYNAANNMTLEDATALLNHPTVGLLEEMSGHHHQPTLEMNPMMGLVGGDFNGHAATLSGTLPPGTLIATNSNNLYSFAHLGGLQHQLLQQSAAVAAFQNYTEVMDADGMTVGLATDPHGELMDETCDDEDQVYGHQIDDGYDDGGAGLEPKQEIINIDDFVMMNEDNNSYDGTDFMTSSDKDISQSSSSGLTHMQGGGVSLGVAGAEHDLLVPLGDGLMHHKLLGATLAPAMPLNVGNSNVFGNIMVTGADPPSSKQMKGYRNSNSSGTSSATVTTVASTAVMRAQRKTRKIEPVNRPGLVLKTPIAYKGNIDPSVIPIQKDGMAVCERCGAIGVKHTFYTKSRRFCSMACARGELYSLVLNNKMETTGATTSNNQSTSSSPLPAASGTSLDVTEDALLASDQPQSDIELDLHAAHIKNANYRFRITDQSKITQLNSFGEPMSLGGDAAAHNVQMAADETIAALNGAAVGDAAAPGGEANGSGNDTSTPNTASSGYLSAAPTPKALRLFKDVYPQDDLPQIPKYERLPAPCPQMEKVLSIRRRMYDPTHSYDWLPRLNKENFNAAPVTCFPHAPGCEVWDNLGVGMKVEVENTDCDNIEIIQPGQTPTSFWVATILEIKGYKALMSYEGFDTDSHDFWVNLCNAEVHSVGWCATRGKPLIPPRTIEHKYKDWKDFLVGRLSGARTLPSNFYNKINDSLQSRFRLGLNLECVDKDRISQVRLATVTKIVGKRLFLRYFDTDDGFWCHEDSPIIHPVGWATTVGHNLAAPQDYLERMLAGREAMIEVHEDDATIELFKMNFTFDEYFLDGKTNGFIEGMKLEAVDPLNLSSICPATVMAVLKFGYMMIRIDSYQPDESGSDWFCYHEKSPCIFPAGFCSANNISVTPPNGYDSRTFTWEVYLRNTGAVAANQHLFHRVVPEHGFETGMSLECADLMDPRLVCVATVARVVGRLLKVHFDGWTDEYDQWLDCESADIYPVGWCILVGHKLEGPPRVSYQQVAKPAPKPKVPRKKKTKKGASTTGGGAAKQQNDNTQTTQTVKPRTIALKTTPHLPKLSIKLELKPEHHNAAFYENNQPEDGDGDEEDPDPDADADLDADADGDGDGSTSHISEQSTTHSSSDQILGSGSGGGSTSAPVVTAATGSIGGNSNKMNSSATSSKYIPRLADIDASEAAHLELQPDSWNVYDVSQFLRVNDCTAYCDTFSRSKIDGKRLLQLTKDDIMPLLGMKVGPALIISDLITQLKCKVNPGRARSHKTNKSSYL</sequence>
<keyword id="KW-0156">Chromatin regulator</keyword>
<keyword id="KW-0238">DNA-binding</keyword>
<keyword id="KW-0479">Metal-binding</keyword>
<keyword id="KW-0539">Nucleus</keyword>
<keyword id="KW-1185">Reference proteome</keyword>
<keyword id="KW-0677">Repeat</keyword>
<keyword id="KW-0678">Repressor</keyword>
<keyword id="KW-0804">Transcription</keyword>
<keyword id="KW-0805">Transcription regulation</keyword>
<keyword id="KW-0862">Zinc</keyword>
<keyword id="KW-0863">Zinc-finger</keyword>